<accession>B0KCJ5</accession>
<proteinExistence type="inferred from homology"/>
<evidence type="ECO:0000250" key="1"/>
<evidence type="ECO:0000255" key="2">
    <source>
        <dbReference type="HAMAP-Rule" id="MF_00403"/>
    </source>
</evidence>
<evidence type="ECO:0000305" key="3"/>
<feature type="chain" id="PRO_1000123530" description="Small ribosomal subunit protein uS12">
    <location>
        <begin position="1"/>
        <end position="124"/>
    </location>
</feature>
<feature type="modified residue" description="3-methylthioaspartic acid" evidence="1">
    <location>
        <position position="89"/>
    </location>
</feature>
<comment type="function">
    <text evidence="2">With S4 and S5 plays an important role in translational accuracy.</text>
</comment>
<comment type="function">
    <text evidence="2">Interacts with and stabilizes bases of the 16S rRNA that are involved in tRNA selection in the A site and with the mRNA backbone. Located at the interface of the 30S and 50S subunits, it traverses the body of the 30S subunit contacting proteins on the other side and probably holding the rRNA structure together. The combined cluster of proteins S8, S12 and S17 appears to hold together the shoulder and platform of the 30S subunit.</text>
</comment>
<comment type="subunit">
    <text evidence="2">Part of the 30S ribosomal subunit. Contacts proteins S8 and S17. May interact with IF1 in the 30S initiation complex.</text>
</comment>
<comment type="similarity">
    <text evidence="2">Belongs to the universal ribosomal protein uS12 family.</text>
</comment>
<dbReference type="EMBL" id="CP000924">
    <property type="protein sequence ID" value="ABY94038.1"/>
    <property type="molecule type" value="Genomic_DNA"/>
</dbReference>
<dbReference type="RefSeq" id="WP_003868702.1">
    <property type="nucleotide sequence ID" value="NC_010321.1"/>
</dbReference>
<dbReference type="SMR" id="B0KCJ5"/>
<dbReference type="STRING" id="340099.Teth39_0369"/>
<dbReference type="KEGG" id="tpd:Teth39_0369"/>
<dbReference type="eggNOG" id="COG0048">
    <property type="taxonomic scope" value="Bacteria"/>
</dbReference>
<dbReference type="HOGENOM" id="CLU_104295_1_2_9"/>
<dbReference type="Proteomes" id="UP000002156">
    <property type="component" value="Chromosome"/>
</dbReference>
<dbReference type="GO" id="GO:0015935">
    <property type="term" value="C:small ribosomal subunit"/>
    <property type="evidence" value="ECO:0007669"/>
    <property type="project" value="InterPro"/>
</dbReference>
<dbReference type="GO" id="GO:0019843">
    <property type="term" value="F:rRNA binding"/>
    <property type="evidence" value="ECO:0007669"/>
    <property type="project" value="UniProtKB-UniRule"/>
</dbReference>
<dbReference type="GO" id="GO:0003735">
    <property type="term" value="F:structural constituent of ribosome"/>
    <property type="evidence" value="ECO:0007669"/>
    <property type="project" value="InterPro"/>
</dbReference>
<dbReference type="GO" id="GO:0000049">
    <property type="term" value="F:tRNA binding"/>
    <property type="evidence" value="ECO:0007669"/>
    <property type="project" value="UniProtKB-UniRule"/>
</dbReference>
<dbReference type="GO" id="GO:0006412">
    <property type="term" value="P:translation"/>
    <property type="evidence" value="ECO:0007669"/>
    <property type="project" value="UniProtKB-UniRule"/>
</dbReference>
<dbReference type="CDD" id="cd03368">
    <property type="entry name" value="Ribosomal_S12"/>
    <property type="match status" value="1"/>
</dbReference>
<dbReference type="FunFam" id="2.40.50.140:FF:000001">
    <property type="entry name" value="30S ribosomal protein S12"/>
    <property type="match status" value="1"/>
</dbReference>
<dbReference type="Gene3D" id="2.40.50.140">
    <property type="entry name" value="Nucleic acid-binding proteins"/>
    <property type="match status" value="1"/>
</dbReference>
<dbReference type="HAMAP" id="MF_00403_B">
    <property type="entry name" value="Ribosomal_uS12_B"/>
    <property type="match status" value="1"/>
</dbReference>
<dbReference type="InterPro" id="IPR012340">
    <property type="entry name" value="NA-bd_OB-fold"/>
</dbReference>
<dbReference type="InterPro" id="IPR006032">
    <property type="entry name" value="Ribosomal_uS12"/>
</dbReference>
<dbReference type="InterPro" id="IPR005679">
    <property type="entry name" value="Ribosomal_uS12_bac"/>
</dbReference>
<dbReference type="NCBIfam" id="TIGR00981">
    <property type="entry name" value="rpsL_bact"/>
    <property type="match status" value="1"/>
</dbReference>
<dbReference type="PANTHER" id="PTHR11652">
    <property type="entry name" value="30S RIBOSOMAL PROTEIN S12 FAMILY MEMBER"/>
    <property type="match status" value="1"/>
</dbReference>
<dbReference type="Pfam" id="PF00164">
    <property type="entry name" value="Ribosom_S12_S23"/>
    <property type="match status" value="1"/>
</dbReference>
<dbReference type="PIRSF" id="PIRSF002133">
    <property type="entry name" value="Ribosomal_S12/S23"/>
    <property type="match status" value="1"/>
</dbReference>
<dbReference type="PRINTS" id="PR01034">
    <property type="entry name" value="RIBOSOMALS12"/>
</dbReference>
<dbReference type="SUPFAM" id="SSF50249">
    <property type="entry name" value="Nucleic acid-binding proteins"/>
    <property type="match status" value="1"/>
</dbReference>
<dbReference type="PROSITE" id="PS00055">
    <property type="entry name" value="RIBOSOMAL_S12"/>
    <property type="match status" value="1"/>
</dbReference>
<reference key="1">
    <citation type="submission" date="2008-01" db="EMBL/GenBank/DDBJ databases">
        <title>Complete sequence of Thermoanaerobacter pseudethanolicus 39E.</title>
        <authorList>
            <person name="Copeland A."/>
            <person name="Lucas S."/>
            <person name="Lapidus A."/>
            <person name="Barry K."/>
            <person name="Glavina del Rio T."/>
            <person name="Dalin E."/>
            <person name="Tice H."/>
            <person name="Pitluck S."/>
            <person name="Bruce D."/>
            <person name="Goodwin L."/>
            <person name="Saunders E."/>
            <person name="Brettin T."/>
            <person name="Detter J.C."/>
            <person name="Han C."/>
            <person name="Schmutz J."/>
            <person name="Larimer F."/>
            <person name="Land M."/>
            <person name="Hauser L."/>
            <person name="Kyrpides N."/>
            <person name="Lykidis A."/>
            <person name="Hemme C."/>
            <person name="Fields M.W."/>
            <person name="He Z."/>
            <person name="Zhou J."/>
            <person name="Richardson P."/>
        </authorList>
    </citation>
    <scope>NUCLEOTIDE SEQUENCE [LARGE SCALE GENOMIC DNA]</scope>
    <source>
        <strain>ATCC 33223 / DSM 2355 / 39E</strain>
    </source>
</reference>
<keyword id="KW-0488">Methylation</keyword>
<keyword id="KW-1185">Reference proteome</keyword>
<keyword id="KW-0687">Ribonucleoprotein</keyword>
<keyword id="KW-0689">Ribosomal protein</keyword>
<keyword id="KW-0694">RNA-binding</keyword>
<keyword id="KW-0699">rRNA-binding</keyword>
<keyword id="KW-0820">tRNA-binding</keyword>
<name>RS12_THEP3</name>
<gene>
    <name evidence="2" type="primary">rpsL</name>
    <name type="ordered locus">Teth39_0369</name>
</gene>
<protein>
    <recommendedName>
        <fullName evidence="2">Small ribosomal subunit protein uS12</fullName>
    </recommendedName>
    <alternativeName>
        <fullName evidence="3">30S ribosomal protein S12</fullName>
    </alternativeName>
</protein>
<sequence length="124" mass="13515">MPTINQLVRQGRKPVKYKSAAPALEGNPQKRGVCVVVKTTTPKKPNSALRKIARVRLTNGTEVTAYIPGIGHNLQEHSVVLVRGGRVKDLPGVRYKIIRGALDAAGVANRKQARSRYGAKKPKK</sequence>
<organism>
    <name type="scientific">Thermoanaerobacter pseudethanolicus (strain ATCC 33223 / 39E)</name>
    <name type="common">Clostridium thermohydrosulfuricum</name>
    <dbReference type="NCBI Taxonomy" id="340099"/>
    <lineage>
        <taxon>Bacteria</taxon>
        <taxon>Bacillati</taxon>
        <taxon>Bacillota</taxon>
        <taxon>Clostridia</taxon>
        <taxon>Thermoanaerobacterales</taxon>
        <taxon>Thermoanaerobacteraceae</taxon>
        <taxon>Thermoanaerobacter</taxon>
    </lineage>
</organism>